<protein>
    <recommendedName>
        <fullName evidence="4">Aspartate aminotransferase</fullName>
        <shortName evidence="4">AspAT</shortName>
        <ecNumber evidence="1">2.6.1.1</ecNumber>
    </recommendedName>
</protein>
<organism>
    <name type="scientific">Corynebacterium glutamicum (strain ATCC 13032 / DSM 20300 / JCM 1318 / BCRC 11384 / CCUG 27702 / LMG 3730 / NBRC 12168 / NCIMB 10025 / NRRL B-2784 / 534)</name>
    <dbReference type="NCBI Taxonomy" id="196627"/>
    <lineage>
        <taxon>Bacteria</taxon>
        <taxon>Bacillati</taxon>
        <taxon>Actinomycetota</taxon>
        <taxon>Actinomycetes</taxon>
        <taxon>Mycobacteriales</taxon>
        <taxon>Corynebacteriaceae</taxon>
        <taxon>Corynebacterium</taxon>
    </lineage>
</organism>
<reference key="1">
    <citation type="journal article" date="2003" name="Appl. Microbiol. Biotechnol.">
        <title>The Corynebacterium glutamicum genome: features and impacts on biotechnological processes.</title>
        <authorList>
            <person name="Ikeda M."/>
            <person name="Nakagawa S."/>
        </authorList>
    </citation>
    <scope>NUCLEOTIDE SEQUENCE [LARGE SCALE GENOMIC DNA]</scope>
    <source>
        <strain>ATCC 13032 / DSM 20300 / JCM 1318 / BCRC 11384 / CCUG 27702 / LMG 3730 / NBRC 12168 / NCIMB 10025 / NRRL B-2784 / 534</strain>
    </source>
</reference>
<reference evidence="7" key="2">
    <citation type="submission" date="2010-11" db="PDB data bank">
        <title>Crystal structure of an aspartate transaminase (NCgl0237, Cgl0240) from Corynebacterium glutamicum ATCC 13032 kitasato at 1.25 A resolution.</title>
        <authorList>
            <consortium name="Joint Center for Structural Genomics (JCSG)"/>
        </authorList>
    </citation>
    <scope>X-RAY CRYSTALLOGRAPHY (1.25 ANGSTROMS) OF 7-432 IN COMPLEX WITH PYRIDOXAL PHOSPHATE</scope>
    <source>
        <strain>ATCC 13032 / DSM 20300 / JCM 1318 / BCRC 11384 / CCUG 27702 / LMG 3730 / NBRC 12168 / NCIMB 10025 / NRRL B-2784 / 534</strain>
    </source>
</reference>
<reference evidence="9" key="3">
    <citation type="journal article" date="2016" name="PLoS ONE">
        <title>Structural insights into a novel class of aspartate aminotransferase from Corynebacterium glutamicum.</title>
        <authorList>
            <person name="Son H.F."/>
            <person name="Kim K.J."/>
        </authorList>
    </citation>
    <scope>X-RAY CRYSTALLOGRAPHY (2.00 ANGSTROMS) OF 7-432 IN COMPLEX WITH PYRIDOXAL PHOSPHATE</scope>
    <scope>CATALYTIC ACTIVITY</scope>
    <scope>COFACTOR</scope>
    <scope>SUBUNIT</scope>
    <scope>MUTAGENESIS OF ARG-45; LYS-47; TYR-79; SER-109; SER-110; TYR-148; ARG-150; ASN-197; ASP-226; TYR-229; SER-264; LYS-265 AND ARG-400</scope>
    <source>
        <strain>ATCC 13032 / DSM 20300 / JCM 1318 / BCRC 11384 / CCUG 27702 / LMG 3730 / NBRC 12168 / NCIMB 10025 / NRRL B-2784 / 534</strain>
    </source>
</reference>
<reference evidence="8" key="4">
    <citation type="submission" date="2016-01" db="PDB data bank">
        <title>Structural insights into a novel class of aspartate aminotransferase from Corynebacterium glutamicum.</title>
        <authorList>
            <person name="Son H.-F."/>
            <person name="Kim K.-J."/>
        </authorList>
    </citation>
    <scope>X-RAY CRYSTALLOGRAPHY (2.00 ANGSTROMS) OF 7-432 IN COMPLEX WITH PYRIDOXAL PHOSPHATE; 2-OXOGLUTARIC ACID AND L-GLUTAMIC ACID</scope>
</reference>
<accession>Q8NTR2</accession>
<sequence length="432" mass="47296">MRRYAVMSSVSLQDFDAERIGLFHEDIKRKFDELKSKNLKLDLTRGKPSSEQLDFADELLALPGKGDFKAADGTDVRNYGGLDGIVDIRQIWADLLGVPVEQVLAGDASSLNIMFDVISWSYIFGNNDSVQPWSKEETVKWICPVPGYDRHFSITERFGFEMISVPMNEDGPDMDAVEELVKNPQVKGMWVVPVFSNPTGFTVTEDVAKRLSAMETAAPDFRVVWDNAYAVHTLTDEFPEVIDIVGLGEAAGNPNRFWAFTSTSKITLAGAGVSFFLTSAENRKWYTGHAGIRGIGPNKVNQLAHARYFGDAEGVRAVMRKHAASLAPKFNKVLEILDSRLAEYGVAQWTVPAGGYFISLDVVPGTASRVAELAKEAGIALTGAGSSYPLRQDPENKNLRLAPSLPPVEELEVAMDGVATCVLLAAAEHYAN</sequence>
<evidence type="ECO:0000269" key="1">
    <source>
    </source>
</evidence>
<evidence type="ECO:0000269" key="2">
    <source ref="2"/>
</evidence>
<evidence type="ECO:0000269" key="3">
    <source ref="4"/>
</evidence>
<evidence type="ECO:0000303" key="4">
    <source>
    </source>
</evidence>
<evidence type="ECO:0000305" key="5"/>
<evidence type="ECO:0000312" key="6">
    <source>
        <dbReference type="EMBL" id="BAB97633.1"/>
    </source>
</evidence>
<evidence type="ECO:0007744" key="7">
    <source>
        <dbReference type="PDB" id="3PPL"/>
    </source>
</evidence>
<evidence type="ECO:0007744" key="8">
    <source>
        <dbReference type="PDB" id="5HXX"/>
    </source>
</evidence>
<evidence type="ECO:0007744" key="9">
    <source>
        <dbReference type="PDB" id="5IWQ"/>
    </source>
</evidence>
<evidence type="ECO:0007829" key="10">
    <source>
        <dbReference type="PDB" id="3PPL"/>
    </source>
</evidence>
<proteinExistence type="evidence at protein level"/>
<keyword id="KW-0002">3D-structure</keyword>
<keyword id="KW-0032">Aminotransferase</keyword>
<keyword id="KW-0663">Pyridoxal phosphate</keyword>
<keyword id="KW-1185">Reference proteome</keyword>
<keyword id="KW-0808">Transferase</keyword>
<dbReference type="EC" id="2.6.1.1" evidence="1"/>
<dbReference type="EMBL" id="BA000036">
    <property type="protein sequence ID" value="BAB97633.1"/>
    <property type="molecule type" value="Genomic_DNA"/>
</dbReference>
<dbReference type="RefSeq" id="NP_599493.1">
    <property type="nucleotide sequence ID" value="NC_003450.3"/>
</dbReference>
<dbReference type="PDB" id="3PPL">
    <property type="method" value="X-ray"/>
    <property type="resolution" value="1.25 A"/>
    <property type="chains" value="A/B=7-432"/>
</dbReference>
<dbReference type="PDB" id="5HXX">
    <property type="method" value="X-ray"/>
    <property type="resolution" value="2.00 A"/>
    <property type="chains" value="A/B=7-432"/>
</dbReference>
<dbReference type="PDB" id="5IWQ">
    <property type="method" value="X-ray"/>
    <property type="resolution" value="2.00 A"/>
    <property type="chains" value="A/B=7-432"/>
</dbReference>
<dbReference type="PDBsum" id="3PPL"/>
<dbReference type="PDBsum" id="5HXX"/>
<dbReference type="PDBsum" id="5IWQ"/>
<dbReference type="SMR" id="Q8NTR2"/>
<dbReference type="STRING" id="196627.cg0294"/>
<dbReference type="DNASU" id="1021066"/>
<dbReference type="KEGG" id="cgl:Cgl0240"/>
<dbReference type="PATRIC" id="fig|196627.13.peg.245"/>
<dbReference type="eggNOG" id="COG1167">
    <property type="taxonomic scope" value="Bacteria"/>
</dbReference>
<dbReference type="HOGENOM" id="CLU_635914_0_0_11"/>
<dbReference type="OrthoDB" id="9802328at2"/>
<dbReference type="BioCyc" id="CORYNE:G18NG-9795-MONOMER"/>
<dbReference type="BRENDA" id="2.6.1.1">
    <property type="organism ID" value="960"/>
</dbReference>
<dbReference type="EvolutionaryTrace" id="Q8NTR2"/>
<dbReference type="Proteomes" id="UP000000582">
    <property type="component" value="Chromosome"/>
</dbReference>
<dbReference type="GO" id="GO:0004069">
    <property type="term" value="F:L-aspartate:2-oxoglutarate aminotransferase activity"/>
    <property type="evidence" value="ECO:0007669"/>
    <property type="project" value="UniProtKB-EC"/>
</dbReference>
<dbReference type="CDD" id="cd00609">
    <property type="entry name" value="AAT_like"/>
    <property type="match status" value="1"/>
</dbReference>
<dbReference type="Gene3D" id="3.90.1150.10">
    <property type="entry name" value="Aspartate Aminotransferase, domain 1"/>
    <property type="match status" value="1"/>
</dbReference>
<dbReference type="Gene3D" id="3.40.640.10">
    <property type="entry name" value="Type I PLP-dependent aspartate aminotransferase-like (Major domain)"/>
    <property type="match status" value="1"/>
</dbReference>
<dbReference type="InterPro" id="IPR024551">
    <property type="entry name" value="AspAT_Ic"/>
</dbReference>
<dbReference type="InterPro" id="IPR015424">
    <property type="entry name" value="PyrdxlP-dep_Trfase"/>
</dbReference>
<dbReference type="InterPro" id="IPR015421">
    <property type="entry name" value="PyrdxlP-dep_Trfase_major"/>
</dbReference>
<dbReference type="InterPro" id="IPR015422">
    <property type="entry name" value="PyrdxlP-dep_Trfase_small"/>
</dbReference>
<dbReference type="PANTHER" id="PTHR43799">
    <property type="entry name" value="AMINOTRANSFERASE, PUTATIVE-RELATED"/>
    <property type="match status" value="1"/>
</dbReference>
<dbReference type="PANTHER" id="PTHR43799:SF1">
    <property type="entry name" value="ASPARTATE AMINOTRANSFERASE"/>
    <property type="match status" value="1"/>
</dbReference>
<dbReference type="Pfam" id="PF12897">
    <property type="entry name" value="Asp_aminotransf"/>
    <property type="match status" value="1"/>
</dbReference>
<dbReference type="SUPFAM" id="SSF53383">
    <property type="entry name" value="PLP-dependent transferases"/>
    <property type="match status" value="1"/>
</dbReference>
<feature type="chain" id="PRO_0000450666" description="Aspartate aminotransferase">
    <location>
        <begin position="1"/>
        <end position="432"/>
    </location>
</feature>
<feature type="binding site" evidence="3">
    <location>
        <begin position="45"/>
        <end position="46"/>
    </location>
    <ligand>
        <name>substrate</name>
    </ligand>
</feature>
<feature type="binding site" evidence="1 2 3">
    <location>
        <begin position="109"/>
        <end position="111"/>
    </location>
    <ligand>
        <name>pyridoxal 5'-phosphate</name>
        <dbReference type="ChEBI" id="CHEBI:597326"/>
    </ligand>
</feature>
<feature type="binding site" evidence="3">
    <location>
        <begin position="148"/>
        <end position="150"/>
    </location>
    <ligand>
        <name>substrate</name>
    </ligand>
</feature>
<feature type="binding site" evidence="1 2 3">
    <location>
        <position position="197"/>
    </location>
    <ligand>
        <name>pyridoxal 5'-phosphate</name>
        <dbReference type="ChEBI" id="CHEBI:597326"/>
    </ligand>
</feature>
<feature type="binding site" evidence="1 2 3">
    <location>
        <position position="229"/>
    </location>
    <ligand>
        <name>pyridoxal 5'-phosphate</name>
        <dbReference type="ChEBI" id="CHEBI:597326"/>
    </ligand>
</feature>
<feature type="binding site" evidence="1 2 3">
    <location>
        <begin position="262"/>
        <end position="265"/>
    </location>
    <ligand>
        <name>pyridoxal 5'-phosphate</name>
        <dbReference type="ChEBI" id="CHEBI:597326"/>
    </ligand>
</feature>
<feature type="binding site" evidence="3">
    <location>
        <position position="400"/>
    </location>
    <ligand>
        <name>substrate</name>
    </ligand>
</feature>
<feature type="mutagenesis site" description="Loss of activity." evidence="1">
    <original>R</original>
    <variation>A</variation>
    <location>
        <position position="45"/>
    </location>
</feature>
<feature type="mutagenesis site" description="40% decrease in activity." evidence="1">
    <original>K</original>
    <variation>A</variation>
    <location>
        <position position="47"/>
    </location>
</feature>
<feature type="mutagenesis site" description="Loss of activity." evidence="1">
    <original>Y</original>
    <variation>A</variation>
    <location>
        <position position="79"/>
    </location>
</feature>
<feature type="mutagenesis site" description="30% decrease in activity." evidence="1">
    <original>S</original>
    <variation>A</variation>
    <location>
        <position position="109"/>
    </location>
</feature>
<feature type="mutagenesis site" description="30% decrease in activity." evidence="1">
    <original>S</original>
    <variation>A</variation>
    <location>
        <position position="110"/>
    </location>
</feature>
<feature type="mutagenesis site" description="Loss of activity." evidence="1">
    <original>Y</original>
    <variation>A</variation>
    <location>
        <position position="148"/>
    </location>
</feature>
<feature type="mutagenesis site" description="80% decrease in activity." evidence="1">
    <original>R</original>
    <variation>A</variation>
    <location>
        <position position="150"/>
    </location>
</feature>
<feature type="mutagenesis site" description="Loss of activity." evidence="1">
    <original>N</original>
    <variation>A</variation>
    <location>
        <position position="197"/>
    </location>
</feature>
<feature type="mutagenesis site" description="Loss of activity." evidence="1">
    <original>D</original>
    <variation>A</variation>
    <location>
        <position position="226"/>
    </location>
</feature>
<feature type="mutagenesis site" description="Loss of activity." evidence="1">
    <original>Y</original>
    <variation>A</variation>
    <location>
        <position position="229"/>
    </location>
</feature>
<feature type="mutagenesis site" description="30% decrease in activity." evidence="1">
    <original>S</original>
    <variation>A</variation>
    <location>
        <position position="264"/>
    </location>
</feature>
<feature type="mutagenesis site" description="Loss of activity." evidence="1">
    <original>K</original>
    <variation>A</variation>
    <location>
        <position position="265"/>
    </location>
</feature>
<feature type="mutagenesis site" description="Loss of activity." evidence="1">
    <original>R</original>
    <variation>A</variation>
    <location>
        <position position="400"/>
    </location>
</feature>
<feature type="helix" evidence="10">
    <location>
        <begin position="12"/>
        <end position="14"/>
    </location>
</feature>
<feature type="helix" evidence="10">
    <location>
        <begin position="17"/>
        <end position="36"/>
    </location>
</feature>
<feature type="helix" evidence="10">
    <location>
        <begin position="50"/>
        <end position="54"/>
    </location>
</feature>
<feature type="helix" evidence="10">
    <location>
        <begin position="55"/>
        <end position="61"/>
    </location>
</feature>
<feature type="helix" evidence="10">
    <location>
        <begin position="86"/>
        <end position="96"/>
    </location>
</feature>
<feature type="helix" evidence="10">
    <location>
        <begin position="100"/>
        <end position="102"/>
    </location>
</feature>
<feature type="strand" evidence="10">
    <location>
        <begin position="103"/>
        <end position="105"/>
    </location>
</feature>
<feature type="helix" evidence="10">
    <location>
        <begin position="110"/>
        <end position="124"/>
    </location>
</feature>
<feature type="helix" evidence="10">
    <location>
        <begin position="133"/>
        <end position="135"/>
    </location>
</feature>
<feature type="strand" evidence="10">
    <location>
        <begin position="140"/>
        <end position="146"/>
    </location>
</feature>
<feature type="helix" evidence="10">
    <location>
        <begin position="149"/>
        <end position="157"/>
    </location>
</feature>
<feature type="strand" evidence="10">
    <location>
        <begin position="161"/>
        <end position="168"/>
    </location>
</feature>
<feature type="helix" evidence="10">
    <location>
        <begin position="174"/>
        <end position="180"/>
    </location>
</feature>
<feature type="strand" evidence="10">
    <location>
        <begin position="186"/>
        <end position="191"/>
    </location>
</feature>
<feature type="turn" evidence="10">
    <location>
        <begin position="197"/>
        <end position="199"/>
    </location>
</feature>
<feature type="helix" evidence="10">
    <location>
        <begin position="205"/>
        <end position="213"/>
    </location>
</feature>
<feature type="strand" evidence="10">
    <location>
        <begin position="222"/>
        <end position="226"/>
    </location>
</feature>
<feature type="turn" evidence="10">
    <location>
        <begin position="228"/>
        <end position="231"/>
    </location>
</feature>
<feature type="strand" evidence="10">
    <location>
        <begin position="233"/>
        <end position="236"/>
    </location>
</feature>
<feature type="helix" evidence="10">
    <location>
        <begin position="244"/>
        <end position="250"/>
    </location>
</feature>
<feature type="strand" evidence="10">
    <location>
        <begin position="256"/>
        <end position="263"/>
    </location>
</feature>
<feature type="turn" evidence="10">
    <location>
        <begin position="264"/>
        <end position="266"/>
    </location>
</feature>
<feature type="strand" evidence="10">
    <location>
        <begin position="274"/>
        <end position="277"/>
    </location>
</feature>
<feature type="helix" evidence="10">
    <location>
        <begin position="280"/>
        <end position="293"/>
    </location>
</feature>
<feature type="helix" evidence="10">
    <location>
        <begin position="299"/>
        <end position="309"/>
    </location>
</feature>
<feature type="helix" evidence="10">
    <location>
        <begin position="312"/>
        <end position="341"/>
    </location>
</feature>
<feature type="helix" evidence="10">
    <location>
        <begin position="342"/>
        <end position="344"/>
    </location>
</feature>
<feature type="strand" evidence="10">
    <location>
        <begin position="353"/>
        <end position="356"/>
    </location>
</feature>
<feature type="strand" evidence="10">
    <location>
        <begin position="358"/>
        <end position="361"/>
    </location>
</feature>
<feature type="helix" evidence="10">
    <location>
        <begin position="367"/>
        <end position="376"/>
    </location>
</feature>
<feature type="turn" evidence="10">
    <location>
        <begin position="384"/>
        <end position="387"/>
    </location>
</feature>
<feature type="helix" evidence="10">
    <location>
        <begin position="389"/>
        <end position="391"/>
    </location>
</feature>
<feature type="strand" evidence="10">
    <location>
        <begin position="398"/>
        <end position="401"/>
    </location>
</feature>
<feature type="strand" evidence="10">
    <location>
        <begin position="404"/>
        <end position="406"/>
    </location>
</feature>
<feature type="helix" evidence="10">
    <location>
        <begin position="408"/>
        <end position="430"/>
    </location>
</feature>
<gene>
    <name evidence="6" type="ordered locus">Cgl0240</name>
</gene>
<name>ASPAT_CORGL</name>
<comment type="catalytic activity">
    <reaction evidence="1">
        <text>L-aspartate + 2-oxoglutarate = oxaloacetate + L-glutamate</text>
        <dbReference type="Rhea" id="RHEA:21824"/>
        <dbReference type="ChEBI" id="CHEBI:16452"/>
        <dbReference type="ChEBI" id="CHEBI:16810"/>
        <dbReference type="ChEBI" id="CHEBI:29985"/>
        <dbReference type="ChEBI" id="CHEBI:29991"/>
        <dbReference type="EC" id="2.6.1.1"/>
    </reaction>
</comment>
<comment type="cofactor">
    <cofactor evidence="1">
        <name>pyridoxal 5'-phosphate</name>
        <dbReference type="ChEBI" id="CHEBI:597326"/>
    </cofactor>
</comment>
<comment type="subunit">
    <text evidence="1">Homodimer.</text>
</comment>
<comment type="similarity">
    <text evidence="5">Belongs to the class-I pyridoxal-phosphate-dependent aminotransferase family.</text>
</comment>